<dbReference type="EMBL" id="BC102911">
    <property type="protein sequence ID" value="AAI02912.1"/>
    <property type="status" value="ALT_INIT"/>
    <property type="molecule type" value="mRNA"/>
</dbReference>
<dbReference type="RefSeq" id="NP_001069763.2">
    <property type="nucleotide sequence ID" value="NM_001076295.2"/>
</dbReference>
<dbReference type="SMR" id="Q3ZC52"/>
<dbReference type="FunCoup" id="Q3ZC52">
    <property type="interactions" value="1159"/>
</dbReference>
<dbReference type="STRING" id="9913.ENSBTAP00000035234"/>
<dbReference type="ESTHER" id="bovin-TEX30">
    <property type="family name" value="NLS3-Tex30"/>
</dbReference>
<dbReference type="MEROPS" id="S09.027"/>
<dbReference type="PaxDb" id="9913-ENSBTAP00000035234"/>
<dbReference type="Ensembl" id="ENSBTAT00000035359.6">
    <property type="protein sequence ID" value="ENSBTAP00000035234.4"/>
    <property type="gene ID" value="ENSBTAG00000025221.6"/>
</dbReference>
<dbReference type="GeneID" id="613895"/>
<dbReference type="KEGG" id="bta:613895"/>
<dbReference type="CTD" id="93081"/>
<dbReference type="VEuPathDB" id="HostDB:ENSBTAG00000025221"/>
<dbReference type="VGNC" id="VGNC:35767">
    <property type="gene designation" value="TEX30"/>
</dbReference>
<dbReference type="eggNOG" id="KOG3253">
    <property type="taxonomic scope" value="Eukaryota"/>
</dbReference>
<dbReference type="GeneTree" id="ENSGT00940000162655"/>
<dbReference type="HOGENOM" id="CLU_072792_2_0_1"/>
<dbReference type="InParanoid" id="Q3ZC52"/>
<dbReference type="OMA" id="EVFWLQG"/>
<dbReference type="OrthoDB" id="6415022at2759"/>
<dbReference type="TreeFam" id="TF332335"/>
<dbReference type="Proteomes" id="UP000009136">
    <property type="component" value="Chromosome 12"/>
</dbReference>
<dbReference type="Bgee" id="ENSBTAG00000025221">
    <property type="expression patterns" value="Expressed in oocyte and 105 other cell types or tissues"/>
</dbReference>
<dbReference type="Gene3D" id="3.40.50.1820">
    <property type="entry name" value="alpha/beta hydrolase"/>
    <property type="match status" value="1"/>
</dbReference>
<dbReference type="InterPro" id="IPR029058">
    <property type="entry name" value="AB_hydrolase_fold"/>
</dbReference>
<dbReference type="InterPro" id="IPR046879">
    <property type="entry name" value="KANL3/Tex30_Abhydrolase"/>
</dbReference>
<dbReference type="InterPro" id="IPR026555">
    <property type="entry name" value="NSL3/Tex30"/>
</dbReference>
<dbReference type="PANTHER" id="PTHR13136">
    <property type="entry name" value="TESTIS DEVELOPMENT PROTEIN PRTD"/>
    <property type="match status" value="1"/>
</dbReference>
<dbReference type="PANTHER" id="PTHR13136:SF11">
    <property type="entry name" value="TESTIS-EXPRESSED PROTEIN 30"/>
    <property type="match status" value="1"/>
</dbReference>
<dbReference type="Pfam" id="PF20408">
    <property type="entry name" value="Abhydrolase_11"/>
    <property type="match status" value="1"/>
</dbReference>
<dbReference type="SUPFAM" id="SSF53474">
    <property type="entry name" value="alpha/beta-Hydrolases"/>
    <property type="match status" value="1"/>
</dbReference>
<proteinExistence type="evidence at transcript level"/>
<name>TEX30_BOVIN</name>
<accession>Q3ZC52</accession>
<protein>
    <recommendedName>
        <fullName>Testis-expressed protein 30</fullName>
    </recommendedName>
</protein>
<reference key="1">
    <citation type="submission" date="2005-08" db="EMBL/GenBank/DDBJ databases">
        <authorList>
            <consortium name="NIH - Mammalian Gene Collection (MGC) project"/>
        </authorList>
    </citation>
    <scope>NUCLEOTIDE SEQUENCE [LARGE SCALE MRNA]</scope>
    <source>
        <strain>Hereford</strain>
        <tissue>Heart ventricle</tissue>
    </source>
</reference>
<evidence type="ECO:0000305" key="1"/>
<sequence>MSHTEVKLKVPFGNKLLDAVCLVPNKSLTYGVILTHGASGDMNLPHLTSLASHLASHGFFCLRFTCKGLNIVHRIKAYKSVLNYLKTSEYKLAGVFLGGRSMGSRAAASVLCHIEPDDADDFVRGLICISYPLHHPKQQHKLRDEDLFRIKDPVLFVSGSADEMCEKNLLEKVAQKMQAPHKIHWIEKANHSMAVKGRSTNDVFKEINTQILFWIQEITETDKK</sequence>
<organism>
    <name type="scientific">Bos taurus</name>
    <name type="common">Bovine</name>
    <dbReference type="NCBI Taxonomy" id="9913"/>
    <lineage>
        <taxon>Eukaryota</taxon>
        <taxon>Metazoa</taxon>
        <taxon>Chordata</taxon>
        <taxon>Craniata</taxon>
        <taxon>Vertebrata</taxon>
        <taxon>Euteleostomi</taxon>
        <taxon>Mammalia</taxon>
        <taxon>Eutheria</taxon>
        <taxon>Laurasiatheria</taxon>
        <taxon>Artiodactyla</taxon>
        <taxon>Ruminantia</taxon>
        <taxon>Pecora</taxon>
        <taxon>Bovidae</taxon>
        <taxon>Bovinae</taxon>
        <taxon>Bos</taxon>
    </lineage>
</organism>
<keyword id="KW-1185">Reference proteome</keyword>
<feature type="chain" id="PRO_0000274311" description="Testis-expressed protein 30">
    <location>
        <begin position="1"/>
        <end position="224"/>
    </location>
</feature>
<gene>
    <name type="primary">TEX30</name>
</gene>
<comment type="sequence caution" evidence="1">
    <conflict type="erroneous initiation">
        <sequence resource="EMBL-CDS" id="AAI02912"/>
    </conflict>
</comment>